<protein>
    <recommendedName>
        <fullName>Unknown protein from spot 104 of 2D-PAGE of thylakoid</fullName>
    </recommendedName>
</protein>
<dbReference type="GO" id="GO:0009534">
    <property type="term" value="C:chloroplast thylakoid"/>
    <property type="evidence" value="ECO:0007669"/>
    <property type="project" value="UniProtKB-SubCell"/>
</dbReference>
<comment type="subcellular location">
    <subcellularLocation>
        <location evidence="1">Plastid</location>
        <location evidence="1">Chloroplast thylakoid</location>
    </subcellularLocation>
</comment>
<comment type="miscellaneous">
    <text evidence="1">On the 2D-gel the determined pI of this protein is: 6.2, its MW is: 16.0 kDa.</text>
</comment>
<feature type="chain" id="PRO_0000234467" description="Unknown protein from spot 104 of 2D-PAGE of thylakoid">
    <location>
        <begin position="1"/>
        <end position="31" status="greater than"/>
    </location>
</feature>
<feature type="unsure residue" description="L or I" evidence="1">
    <location>
        <position position="16"/>
    </location>
</feature>
<feature type="unsure residue" description="K or Q" evidence="1">
    <location>
        <position position="17"/>
    </location>
</feature>
<feature type="non-consecutive residues" evidence="2">
    <location>
        <begin position="13"/>
        <end position="14"/>
    </location>
</feature>
<feature type="non-consecutive residues" evidence="2">
    <location>
        <begin position="20"/>
        <end position="21"/>
    </location>
</feature>
<feature type="non-terminal residue" evidence="2">
    <location>
        <position position="31"/>
    </location>
</feature>
<name>UT104_PEA</name>
<organism>
    <name type="scientific">Pisum sativum</name>
    <name type="common">Garden pea</name>
    <name type="synonym">Lathyrus oleraceus</name>
    <dbReference type="NCBI Taxonomy" id="3888"/>
    <lineage>
        <taxon>Eukaryota</taxon>
        <taxon>Viridiplantae</taxon>
        <taxon>Streptophyta</taxon>
        <taxon>Embryophyta</taxon>
        <taxon>Tracheophyta</taxon>
        <taxon>Spermatophyta</taxon>
        <taxon>Magnoliopsida</taxon>
        <taxon>eudicotyledons</taxon>
        <taxon>Gunneridae</taxon>
        <taxon>Pentapetalae</taxon>
        <taxon>rosids</taxon>
        <taxon>fabids</taxon>
        <taxon>Fabales</taxon>
        <taxon>Fabaceae</taxon>
        <taxon>Papilionoideae</taxon>
        <taxon>50 kb inversion clade</taxon>
        <taxon>NPAAA clade</taxon>
        <taxon>Hologalegina</taxon>
        <taxon>IRL clade</taxon>
        <taxon>Fabeae</taxon>
        <taxon>Pisum</taxon>
    </lineage>
</organism>
<reference evidence="3" key="1">
    <citation type="journal article" date="2000" name="Plant Cell">
        <title>Proteomics of the chloroplast: systematic identification and targeting analysis of lumenal and peripheral thylakoid proteins.</title>
        <authorList>
            <person name="Peltier J.-B."/>
            <person name="Friso G."/>
            <person name="Kalume D.E."/>
            <person name="Roepstorff P."/>
            <person name="Nilsson F."/>
            <person name="Adamska I."/>
            <person name="van Wijk K.J."/>
        </authorList>
    </citation>
    <scope>PROTEIN SEQUENCE</scope>
    <scope>SUBCELLULAR LOCATION</scope>
    <source>
        <strain evidence="1">cv. De Grace</strain>
        <tissue evidence="1">Leaf</tissue>
    </source>
</reference>
<proteinExistence type="evidence at protein level"/>
<sequence length="31" mass="3446">AILEADDDVELLEGYLKDWEAFVSSAAAFEK</sequence>
<accession>P82323</accession>
<keyword id="KW-0150">Chloroplast</keyword>
<keyword id="KW-0903">Direct protein sequencing</keyword>
<keyword id="KW-0934">Plastid</keyword>
<keyword id="KW-0793">Thylakoid</keyword>
<evidence type="ECO:0000269" key="1">
    <source>
    </source>
</evidence>
<evidence type="ECO:0000303" key="2">
    <source>
    </source>
</evidence>
<evidence type="ECO:0000305" key="3"/>